<protein>
    <recommendedName>
        <fullName evidence="13">Alpha-1,3-mannosyl-glycoprotein 2-beta-N-acetylglucosaminyltransferase</fullName>
        <ecNumber evidence="6">2.4.1.101</ecNumber>
    </recommendedName>
    <alternativeName>
        <fullName evidence="11">N-acetylglucosaminyltransferase I</fullName>
        <shortName evidence="11">GlcNAcT-I</shortName>
    </alternativeName>
    <alternativeName>
        <fullName evidence="13">N-glycosyl-oligosaccharide-glycoprotein N-acetylglucosaminyltransferase I</fullName>
    </alternativeName>
    <alternativeName>
        <fullName evidence="12">Protein COMPLEX GLYCAN LESS 1</fullName>
    </alternativeName>
</protein>
<feature type="chain" id="PRO_0000356191" description="Alpha-1,3-mannosyl-glycoprotein 2-beta-N-acetylglucosaminyltransferase">
    <location>
        <begin position="1"/>
        <end position="444"/>
    </location>
</feature>
<feature type="topological domain" description="Cytoplasmic" evidence="2">
    <location>
        <begin position="1"/>
        <end position="6"/>
    </location>
</feature>
<feature type="transmembrane region" description="Helical; Signal-anchor for type II membrane protein" evidence="2">
    <location>
        <begin position="7"/>
        <end position="24"/>
    </location>
</feature>
<feature type="topological domain" description="Lumenal" evidence="2">
    <location>
        <begin position="25"/>
        <end position="444"/>
    </location>
</feature>
<feature type="coiled-coil region" evidence="2">
    <location>
        <begin position="61"/>
        <end position="92"/>
    </location>
</feature>
<feature type="active site" description="Proton acceptor" evidence="2">
    <location>
        <position position="287"/>
    </location>
</feature>
<feature type="binding site" evidence="1">
    <location>
        <position position="115"/>
    </location>
    <ligand>
        <name>substrate</name>
    </ligand>
</feature>
<feature type="binding site" evidence="1">
    <location>
        <position position="144"/>
    </location>
    <ligand>
        <name>substrate</name>
    </ligand>
</feature>
<feature type="binding site" evidence="1">
    <location>
        <position position="188"/>
    </location>
    <ligand>
        <name>substrate</name>
    </ligand>
</feature>
<feature type="binding site" evidence="1">
    <location>
        <position position="210"/>
    </location>
    <ligand>
        <name>substrate</name>
    </ligand>
</feature>
<feature type="binding site" evidence="1">
    <location>
        <position position="211"/>
    </location>
    <ligand>
        <name>Mn(2+)</name>
        <dbReference type="ChEBI" id="CHEBI:29035"/>
    </ligand>
</feature>
<feature type="binding site" evidence="1">
    <location>
        <position position="318"/>
    </location>
    <ligand>
        <name>substrate</name>
    </ligand>
</feature>
<feature type="glycosylation site" description="N-linked (GlcNAc...) asparagine" evidence="3">
    <location>
        <position position="351"/>
    </location>
</feature>
<feature type="mutagenesis site" description="In cgl1 C5/cgl1-1; loss of activity due to degradation in the endoplasmic reticulum.">
    <original>D</original>
    <variation>N</variation>
    <location>
        <position position="144"/>
    </location>
</feature>
<feature type="mutagenesis site" description="Loss of glycosylation. No effect on localization and stability." evidence="8">
    <original>T</original>
    <variation>V</variation>
    <location>
        <position position="353"/>
    </location>
</feature>
<feature type="sequence conflict" description="In Ref. 2; CAC80700." evidence="13" ref="2">
    <original>R</original>
    <variation>A</variation>
    <location>
        <position position="303"/>
    </location>
</feature>
<feature type="sequence conflict" description="In Ref. 2; CAC80700." evidence="13" ref="2">
    <original>V</original>
    <variation>D</variation>
    <location>
        <position position="382"/>
    </location>
</feature>
<evidence type="ECO:0000250" key="1">
    <source>
        <dbReference type="UniProtKB" id="P27115"/>
    </source>
</evidence>
<evidence type="ECO:0000255" key="2"/>
<evidence type="ECO:0000255" key="3">
    <source>
        <dbReference type="PROSITE-ProRule" id="PRU00498"/>
    </source>
</evidence>
<evidence type="ECO:0000269" key="4">
    <source>
    </source>
</evidence>
<evidence type="ECO:0000269" key="5">
    <source>
    </source>
</evidence>
<evidence type="ECO:0000269" key="6">
    <source>
    </source>
</evidence>
<evidence type="ECO:0000269" key="7">
    <source>
    </source>
</evidence>
<evidence type="ECO:0000269" key="8">
    <source>
    </source>
</evidence>
<evidence type="ECO:0000269" key="9">
    <source>
    </source>
</evidence>
<evidence type="ECO:0000269" key="10">
    <source>
    </source>
</evidence>
<evidence type="ECO:0000303" key="11">
    <source>
    </source>
</evidence>
<evidence type="ECO:0000303" key="12">
    <source>
    </source>
</evidence>
<evidence type="ECO:0000305" key="13"/>
<evidence type="ECO:0000312" key="14">
    <source>
        <dbReference type="Araport" id="AT4G38240"/>
    </source>
</evidence>
<evidence type="ECO:0000312" key="15">
    <source>
        <dbReference type="EMBL" id="CAB37480.1"/>
    </source>
</evidence>
<evidence type="ECO:0000312" key="16">
    <source>
        <dbReference type="EMBL" id="CAB37564.1"/>
    </source>
</evidence>
<sequence length="444" mass="51634">MARISCDLRFLLIPAAFMFIYIQMRLFQTQSQYADRLSSAIESENHCTSQMRGLIDEVSIKQSRIVALEDMKNRQDEELVQLKDLIQTFEKKGIAKLTQGGQMPVAAVVVMACSRADYLERTVKSVLTYQTPVASKYPLFISQDGSDQAVKSKSLSYNQLTYMQHLDFEPVVTERPGELTAYYKIARHYKWALDQLFYKHKFSRVIILEDDMEIAPDFFDYFEAAASLMDRDKTIMAASSWNDNGQKQFVHDPYALYRSDFFPGLGWMLKRSTWDELSPKWPKAYWDDWLRLKENHKGRQFIRPEVCRTYNFGEHGSSLGQFFSQYLEPIKLNDVTVDWKAKDLGYLTEGNYTKYFSGLVRQARPIQGSDLVLKAQNIKDDVRIRYKDQVEFERIAGEFGIFEEWKDGVPRTAYKGVVVFRIQTTRRVFLVGPDSVMQLGIRNS</sequence>
<comment type="function">
    <text evidence="4 7 8 9 10">Initiates complex N-linked carbohydrate formation. Essential for the conversion of high-mannose to hybrid and complex N-glycans. Required for normal root growth and morphology.</text>
</comment>
<comment type="catalytic activity">
    <reaction evidence="6">
        <text>N(4)-(alpha-D-Man-(1-&gt;3)-[alpha-D-Man-(1-&gt;3)-[alpha-D-Man-(1-&gt;6)]-alpha-D-Man-(1-&gt;6)]-beta-D-Man-(1-&gt;4)-beta-D-GlcNAc-(1-&gt;4)-beta-D-GlcNAc)-L-asparaginyl-[protein] (N-glucan mannose isomer 5A1,2) + UDP-N-acetyl-alpha-D-glucosamine = N(4)-{beta-D-GlcNAc-(1-&gt;2)-alpha-D-Man-(1-&gt;3)-[alpha-D-Man-(1-&gt;3)-[alpha-D-Man-(1-&gt;6)]-alpha-D-Man-(1-&gt;6)]-beta-D-Man-(1-&gt;4)-beta-D-GlcNAc-(1-&gt;4)-beta-D-GlcNAc}-L-asparaginyl-[protein] + UDP + H(+)</text>
        <dbReference type="Rhea" id="RHEA:11456"/>
        <dbReference type="Rhea" id="RHEA-COMP:14367"/>
        <dbReference type="Rhea" id="RHEA-COMP:14368"/>
        <dbReference type="ChEBI" id="CHEBI:15378"/>
        <dbReference type="ChEBI" id="CHEBI:57705"/>
        <dbReference type="ChEBI" id="CHEBI:58223"/>
        <dbReference type="ChEBI" id="CHEBI:59087"/>
        <dbReference type="ChEBI" id="CHEBI:60625"/>
        <dbReference type="EC" id="2.4.1.101"/>
    </reaction>
</comment>
<comment type="cofactor">
    <cofactor evidence="1">
        <name>Mn(2+)</name>
        <dbReference type="ChEBI" id="CHEBI:29035"/>
    </cofactor>
    <text evidence="1">The cofactor is mostly bound to the substrate.</text>
</comment>
<comment type="biophysicochemical properties">
    <kinetics>
        <KM evidence="6">0.14 mM for Man(5)-glycopeptide</KM>
        <KM evidence="6">0.05 mM for UDP-GlcNAc</KM>
        <Vmax evidence="6">3.42 umol/min/mg enzyme toward Man(5)-glycopeptide</Vmax>
        <Vmax evidence="6">0.09 umol/min/mg enzyme toward Man(3)-octyl</Vmax>
        <text>the apparent KM is &gt;3.0 mM for Man(3)-octyl.</text>
    </kinetics>
</comment>
<comment type="pathway">
    <text evidence="13">Protein modification; protein glycosylation.</text>
</comment>
<comment type="subcellular location">
    <subcellularLocation>
        <location evidence="8 9">Golgi apparatus membrane</location>
        <topology evidence="8 9">Single-pass type II membrane protein</topology>
    </subcellularLocation>
</comment>
<comment type="alternative products">
    <event type="alternative splicing"/>
    <isoform>
        <id>Q9XGM8-1</id>
        <name>1</name>
        <sequence type="displayed"/>
    </isoform>
    <text>A number of isoforms are produced. According to EST sequences.</text>
</comment>
<comment type="tissue specificity">
    <text evidence="5">Expressed in roots, stems, leaves and flowers.</text>
</comment>
<comment type="PTM">
    <text>Glycosylated.</text>
</comment>
<comment type="disruption phenotype">
    <text evidence="8 10">Plants have an increased salt-sensitivity resulting in growth inhibition, aberrant root-tip morphology and callose accumulation.</text>
</comment>
<comment type="miscellaneous">
    <text evidence="6">Creation of a second N-glycosylation site in mutant cgl1 C5/cgl1-1 interferes with protein folding and sequesters the protein for degradation in the endoplasmic reticulum.</text>
</comment>
<comment type="similarity">
    <text evidence="13">Belongs to the glycosyltransferase 13 family.</text>
</comment>
<comment type="sequence caution" evidence="13">
    <conflict type="erroneous gene model prediction">
        <sequence resource="EMBL-CDS" id="CAB37480"/>
    </conflict>
</comment>
<comment type="sequence caution" evidence="13">
    <conflict type="erroneous gene model prediction">
        <sequence resource="EMBL-CDS" id="CAB37564"/>
    </conflict>
</comment>
<comment type="sequence caution" evidence="13">
    <conflict type="erroneous gene model prediction">
        <sequence resource="EMBL-CDS" id="CAB80489"/>
    </conflict>
</comment>
<organism>
    <name type="scientific">Arabidopsis thaliana</name>
    <name type="common">Mouse-ear cress</name>
    <dbReference type="NCBI Taxonomy" id="3702"/>
    <lineage>
        <taxon>Eukaryota</taxon>
        <taxon>Viridiplantae</taxon>
        <taxon>Streptophyta</taxon>
        <taxon>Embryophyta</taxon>
        <taxon>Tracheophyta</taxon>
        <taxon>Spermatophyta</taxon>
        <taxon>Magnoliopsida</taxon>
        <taxon>eudicotyledons</taxon>
        <taxon>Gunneridae</taxon>
        <taxon>Pentapetalae</taxon>
        <taxon>rosids</taxon>
        <taxon>malvids</taxon>
        <taxon>Brassicales</taxon>
        <taxon>Brassicaceae</taxon>
        <taxon>Camelineae</taxon>
        <taxon>Arabidopsis</taxon>
    </lineage>
</organism>
<name>MGAT1_ARATH</name>
<keyword id="KW-0025">Alternative splicing</keyword>
<keyword id="KW-0175">Coiled coil</keyword>
<keyword id="KW-0325">Glycoprotein</keyword>
<keyword id="KW-0328">Glycosyltransferase</keyword>
<keyword id="KW-0333">Golgi apparatus</keyword>
<keyword id="KW-0464">Manganese</keyword>
<keyword id="KW-0472">Membrane</keyword>
<keyword id="KW-0479">Metal-binding</keyword>
<keyword id="KW-1185">Reference proteome</keyword>
<keyword id="KW-0735">Signal-anchor</keyword>
<keyword id="KW-0808">Transferase</keyword>
<keyword id="KW-0812">Transmembrane</keyword>
<keyword id="KW-1133">Transmembrane helix</keyword>
<reference key="1">
    <citation type="journal article" date="1999" name="Biochem. Biophys. Res. Commun.">
        <title>An Arabidopsis thaliana cDNA complements the N-acetylglucosaminyltransferase I deficiency of CHO Lec1 cells.</title>
        <authorList>
            <person name="Bakker H."/>
            <person name="Lommen A."/>
            <person name="Jordi W."/>
            <person name="Stiekema W."/>
            <person name="Bosch D."/>
        </authorList>
    </citation>
    <scope>NUCLEOTIDE SEQUENCE [MRNA]</scope>
    <scope>FUNCTION</scope>
    <source>
        <strain>cv. Columbia</strain>
    </source>
</reference>
<reference key="2">
    <citation type="journal article" date="2000" name="Plant Physiol.">
        <title>Isolation and characterization of plant N-acetyl glucosaminyltransferase I (GntI) cDNA sequences. Functional analyses in the Arabidopsis cgl mutant and in antisense plants.</title>
        <authorList>
            <person name="Wenderoth I."/>
            <person name="von Schaewen A."/>
        </authorList>
    </citation>
    <scope>NUCLEOTIDE SEQUENCE [MRNA]</scope>
    <scope>TISSUE SPECIFICITY</scope>
    <source>
        <strain>cv. Columbia</strain>
    </source>
</reference>
<reference key="3">
    <citation type="journal article" date="1999" name="Nature">
        <title>Sequence and analysis of chromosome 4 of the plant Arabidopsis thaliana.</title>
        <authorList>
            <person name="Mayer K.F.X."/>
            <person name="Schueller C."/>
            <person name="Wambutt R."/>
            <person name="Murphy G."/>
            <person name="Volckaert G."/>
            <person name="Pohl T."/>
            <person name="Duesterhoeft A."/>
            <person name="Stiekema W."/>
            <person name="Entian K.-D."/>
            <person name="Terryn N."/>
            <person name="Harris B."/>
            <person name="Ansorge W."/>
            <person name="Brandt P."/>
            <person name="Grivell L.A."/>
            <person name="Rieger M."/>
            <person name="Weichselgartner M."/>
            <person name="de Simone V."/>
            <person name="Obermaier B."/>
            <person name="Mache R."/>
            <person name="Mueller M."/>
            <person name="Kreis M."/>
            <person name="Delseny M."/>
            <person name="Puigdomenech P."/>
            <person name="Watson M."/>
            <person name="Schmidtheini T."/>
            <person name="Reichert B."/>
            <person name="Portetelle D."/>
            <person name="Perez-Alonso M."/>
            <person name="Boutry M."/>
            <person name="Bancroft I."/>
            <person name="Vos P."/>
            <person name="Hoheisel J."/>
            <person name="Zimmermann W."/>
            <person name="Wedler H."/>
            <person name="Ridley P."/>
            <person name="Langham S.-A."/>
            <person name="McCullagh B."/>
            <person name="Bilham L."/>
            <person name="Robben J."/>
            <person name="van der Schueren J."/>
            <person name="Grymonprez B."/>
            <person name="Chuang Y.-J."/>
            <person name="Vandenbussche F."/>
            <person name="Braeken M."/>
            <person name="Weltjens I."/>
            <person name="Voet M."/>
            <person name="Bastiaens I."/>
            <person name="Aert R."/>
            <person name="Defoor E."/>
            <person name="Weitzenegger T."/>
            <person name="Bothe G."/>
            <person name="Ramsperger U."/>
            <person name="Hilbert H."/>
            <person name="Braun M."/>
            <person name="Holzer E."/>
            <person name="Brandt A."/>
            <person name="Peters S."/>
            <person name="van Staveren M."/>
            <person name="Dirkse W."/>
            <person name="Mooijman P."/>
            <person name="Klein Lankhorst R."/>
            <person name="Rose M."/>
            <person name="Hauf J."/>
            <person name="Koetter P."/>
            <person name="Berneiser S."/>
            <person name="Hempel S."/>
            <person name="Feldpausch M."/>
            <person name="Lamberth S."/>
            <person name="Van den Daele H."/>
            <person name="De Keyser A."/>
            <person name="Buysshaert C."/>
            <person name="Gielen J."/>
            <person name="Villarroel R."/>
            <person name="De Clercq R."/>
            <person name="van Montagu M."/>
            <person name="Rogers J."/>
            <person name="Cronin A."/>
            <person name="Quail M.A."/>
            <person name="Bray-Allen S."/>
            <person name="Clark L."/>
            <person name="Doggett J."/>
            <person name="Hall S."/>
            <person name="Kay M."/>
            <person name="Lennard N."/>
            <person name="McLay K."/>
            <person name="Mayes R."/>
            <person name="Pettett A."/>
            <person name="Rajandream M.A."/>
            <person name="Lyne M."/>
            <person name="Benes V."/>
            <person name="Rechmann S."/>
            <person name="Borkova D."/>
            <person name="Bloecker H."/>
            <person name="Scharfe M."/>
            <person name="Grimm M."/>
            <person name="Loehnert T.-H."/>
            <person name="Dose S."/>
            <person name="de Haan M."/>
            <person name="Maarse A.C."/>
            <person name="Schaefer M."/>
            <person name="Mueller-Auer S."/>
            <person name="Gabel C."/>
            <person name="Fuchs M."/>
            <person name="Fartmann B."/>
            <person name="Granderath K."/>
            <person name="Dauner D."/>
            <person name="Herzl A."/>
            <person name="Neumann S."/>
            <person name="Argiriou A."/>
            <person name="Vitale D."/>
            <person name="Liguori R."/>
            <person name="Piravandi E."/>
            <person name="Massenet O."/>
            <person name="Quigley F."/>
            <person name="Clabauld G."/>
            <person name="Muendlein A."/>
            <person name="Felber R."/>
            <person name="Schnabl S."/>
            <person name="Hiller R."/>
            <person name="Schmidt W."/>
            <person name="Lecharny A."/>
            <person name="Aubourg S."/>
            <person name="Chefdor F."/>
            <person name="Cooke R."/>
            <person name="Berger C."/>
            <person name="Monfort A."/>
            <person name="Casacuberta E."/>
            <person name="Gibbons T."/>
            <person name="Weber N."/>
            <person name="Vandenbol M."/>
            <person name="Bargues M."/>
            <person name="Terol J."/>
            <person name="Torres A."/>
            <person name="Perez-Perez A."/>
            <person name="Purnelle B."/>
            <person name="Bent E."/>
            <person name="Johnson S."/>
            <person name="Tacon D."/>
            <person name="Jesse T."/>
            <person name="Heijnen L."/>
            <person name="Schwarz S."/>
            <person name="Scholler P."/>
            <person name="Heber S."/>
            <person name="Francs P."/>
            <person name="Bielke C."/>
            <person name="Frishman D."/>
            <person name="Haase D."/>
            <person name="Lemcke K."/>
            <person name="Mewes H.-W."/>
            <person name="Stocker S."/>
            <person name="Zaccaria P."/>
            <person name="Bevan M."/>
            <person name="Wilson R.K."/>
            <person name="de la Bastide M."/>
            <person name="Habermann K."/>
            <person name="Parnell L."/>
            <person name="Dedhia N."/>
            <person name="Gnoj L."/>
            <person name="Schutz K."/>
            <person name="Huang E."/>
            <person name="Spiegel L."/>
            <person name="Sekhon M."/>
            <person name="Murray J."/>
            <person name="Sheet P."/>
            <person name="Cordes M."/>
            <person name="Abu-Threideh J."/>
            <person name="Stoneking T."/>
            <person name="Kalicki J."/>
            <person name="Graves T."/>
            <person name="Harmon G."/>
            <person name="Edwards J."/>
            <person name="Latreille P."/>
            <person name="Courtney L."/>
            <person name="Cloud J."/>
            <person name="Abbott A."/>
            <person name="Scott K."/>
            <person name="Johnson D."/>
            <person name="Minx P."/>
            <person name="Bentley D."/>
            <person name="Fulton B."/>
            <person name="Miller N."/>
            <person name="Greco T."/>
            <person name="Kemp K."/>
            <person name="Kramer J."/>
            <person name="Fulton L."/>
            <person name="Mardis E."/>
            <person name="Dante M."/>
            <person name="Pepin K."/>
            <person name="Hillier L.W."/>
            <person name="Nelson J."/>
            <person name="Spieth J."/>
            <person name="Ryan E."/>
            <person name="Andrews S."/>
            <person name="Geisel C."/>
            <person name="Layman D."/>
            <person name="Du H."/>
            <person name="Ali J."/>
            <person name="Berghoff A."/>
            <person name="Jones K."/>
            <person name="Drone K."/>
            <person name="Cotton M."/>
            <person name="Joshu C."/>
            <person name="Antonoiu B."/>
            <person name="Zidanic M."/>
            <person name="Strong C."/>
            <person name="Sun H."/>
            <person name="Lamar B."/>
            <person name="Yordan C."/>
            <person name="Ma P."/>
            <person name="Zhong J."/>
            <person name="Preston R."/>
            <person name="Vil D."/>
            <person name="Shekher M."/>
            <person name="Matero A."/>
            <person name="Shah R."/>
            <person name="Swaby I.K."/>
            <person name="O'Shaughnessy A."/>
            <person name="Rodriguez M."/>
            <person name="Hoffman J."/>
            <person name="Till S."/>
            <person name="Granat S."/>
            <person name="Shohdy N."/>
            <person name="Hasegawa A."/>
            <person name="Hameed A."/>
            <person name="Lodhi M."/>
            <person name="Johnson A."/>
            <person name="Chen E."/>
            <person name="Marra M.A."/>
            <person name="Martienssen R."/>
            <person name="McCombie W.R."/>
        </authorList>
    </citation>
    <scope>NUCLEOTIDE SEQUENCE [LARGE SCALE GENOMIC DNA]</scope>
    <source>
        <strain>cv. Columbia</strain>
    </source>
</reference>
<reference key="4">
    <citation type="journal article" date="2017" name="Plant J.">
        <title>Araport11: a complete reannotation of the Arabidopsis thaliana reference genome.</title>
        <authorList>
            <person name="Cheng C.Y."/>
            <person name="Krishnakumar V."/>
            <person name="Chan A.P."/>
            <person name="Thibaud-Nissen F."/>
            <person name="Schobel S."/>
            <person name="Town C.D."/>
        </authorList>
    </citation>
    <scope>GENOME REANNOTATION</scope>
    <source>
        <strain>cv. Columbia</strain>
    </source>
</reference>
<reference key="5">
    <citation type="journal article" date="2003" name="Science">
        <title>Empirical analysis of transcriptional activity in the Arabidopsis genome.</title>
        <authorList>
            <person name="Yamada K."/>
            <person name="Lim J."/>
            <person name="Dale J.M."/>
            <person name="Chen H."/>
            <person name="Shinn P."/>
            <person name="Palm C.J."/>
            <person name="Southwick A.M."/>
            <person name="Wu H.C."/>
            <person name="Kim C.J."/>
            <person name="Nguyen M."/>
            <person name="Pham P.K."/>
            <person name="Cheuk R.F."/>
            <person name="Karlin-Newmann G."/>
            <person name="Liu S.X."/>
            <person name="Lam B."/>
            <person name="Sakano H."/>
            <person name="Wu T."/>
            <person name="Yu G."/>
            <person name="Miranda M."/>
            <person name="Quach H.L."/>
            <person name="Tripp M."/>
            <person name="Chang C.H."/>
            <person name="Lee J.M."/>
            <person name="Toriumi M.J."/>
            <person name="Chan M.M."/>
            <person name="Tang C.C."/>
            <person name="Onodera C.S."/>
            <person name="Deng J.M."/>
            <person name="Akiyama K."/>
            <person name="Ansari Y."/>
            <person name="Arakawa T."/>
            <person name="Banh J."/>
            <person name="Banno F."/>
            <person name="Bowser L."/>
            <person name="Brooks S.Y."/>
            <person name="Carninci P."/>
            <person name="Chao Q."/>
            <person name="Choy N."/>
            <person name="Enju A."/>
            <person name="Goldsmith A.D."/>
            <person name="Gurjal M."/>
            <person name="Hansen N.F."/>
            <person name="Hayashizaki Y."/>
            <person name="Johnson-Hopson C."/>
            <person name="Hsuan V.W."/>
            <person name="Iida K."/>
            <person name="Karnes M."/>
            <person name="Khan S."/>
            <person name="Koesema E."/>
            <person name="Ishida J."/>
            <person name="Jiang P.X."/>
            <person name="Jones T."/>
            <person name="Kawai J."/>
            <person name="Kamiya A."/>
            <person name="Meyers C."/>
            <person name="Nakajima M."/>
            <person name="Narusaka M."/>
            <person name="Seki M."/>
            <person name="Sakurai T."/>
            <person name="Satou M."/>
            <person name="Tamse R."/>
            <person name="Vaysberg M."/>
            <person name="Wallender E.K."/>
            <person name="Wong C."/>
            <person name="Yamamura Y."/>
            <person name="Yuan S."/>
            <person name="Shinozaki K."/>
            <person name="Davis R.W."/>
            <person name="Theologis A."/>
            <person name="Ecker J.R."/>
        </authorList>
    </citation>
    <scope>NUCLEOTIDE SEQUENCE [LARGE SCALE MRNA]</scope>
    <source>
        <strain>cv. Columbia</strain>
    </source>
</reference>
<reference key="6">
    <citation type="journal article" date="1993" name="Plant Physiol.">
        <title>Isolation of a mutant Arabidopsis plant that lacks N-acetyl glucosaminyl transferase I and is unable to synthesize Golgi-modified complex N-linked glycans.</title>
        <authorList>
            <person name="von Schaewen A."/>
            <person name="Sturm A."/>
            <person name="O'Neill J."/>
            <person name="Chrispeels M.J."/>
        </authorList>
    </citation>
    <scope>FUNCTION</scope>
    <scope>DISRUPTION PHENOTYPE</scope>
</reference>
<reference key="7">
    <citation type="journal article" date="1994" name="Proc. Natl. Acad. Sci. U.S.A.">
        <title>Complementation of an Arabidopsis thaliana mutant that lacks complex asparagine-linked glycans with the human cDNA encoding N-acetylglucosaminyltransferase I.</title>
        <authorList>
            <person name="Gomez L."/>
            <person name="Chrispeels M.J."/>
        </authorList>
    </citation>
    <scope>FUNCTION</scope>
    <scope>SUBCELLULAR LOCATION</scope>
</reference>
<reference key="8">
    <citation type="journal article" date="2005" name="Biochem. J.">
        <title>Molecular basis of N-acetylglucosaminyltransferase I deficiency in Arabidopsis thaliana plants lacking complex N-glycans.</title>
        <authorList>
            <person name="Strasser R."/>
            <person name="Stadlmann J."/>
            <person name="Svoboda B."/>
            <person name="Altmann F."/>
            <person name="Gloessl J."/>
            <person name="Mach L."/>
        </authorList>
    </citation>
    <scope>MUTANT CGL1 C5</scope>
    <scope>CATALYTIC ACTIVITY</scope>
    <scope>BIOPHYSICOCHEMICAL PROPERTIES</scope>
</reference>
<reference key="9">
    <citation type="journal article" date="2008" name="Proc. Natl. Acad. Sci. U.S.A.">
        <title>Salt tolerance of Arabidopsis thaliana requires maturation of N-glycosylated proteins in the Golgi apparatus.</title>
        <authorList>
            <person name="Kang J.S."/>
            <person name="Frank J."/>
            <person name="Kang C.H."/>
            <person name="Kajiura H."/>
            <person name="Vikram M."/>
            <person name="Ueda A."/>
            <person name="Kim S."/>
            <person name="Bahk J.D."/>
            <person name="Triplett B."/>
            <person name="Fujiyama K."/>
            <person name="Lee S.Y."/>
            <person name="von Schaewen A."/>
            <person name="Koiwa H."/>
        </authorList>
    </citation>
    <scope>FUNCTION</scope>
</reference>
<reference key="10">
    <citation type="journal article" date="2008" name="Plant Physiol.">
        <title>Comparative analyses of arabidopsis complex glycan1 mutants and genetic interaction with staurosporin and temperature sensitive3a.</title>
        <authorList>
            <person name="Frank J."/>
            <person name="Kaulfuerst-Soboll H."/>
            <person name="Rips S."/>
            <person name="Koiwa H."/>
            <person name="von Schaewen A."/>
        </authorList>
    </citation>
    <scope>FUNCTION</scope>
    <scope>SUBCELLULAR LOCATION</scope>
    <scope>MUTAGENESIS OF THR-353</scope>
    <scope>DISRUPTION PHENOTYPE</scope>
</reference>
<accession>Q9XGM8</accession>
<accession>Q8VWR5</accession>
<accession>Q9SVG1</accession>
<accession>Q9SZM4</accession>
<proteinExistence type="evidence at protein level"/>
<dbReference type="EC" id="2.4.1.101" evidence="6"/>
<dbReference type="EMBL" id="AJ243198">
    <property type="protein sequence ID" value="CAB45521.1"/>
    <property type="molecule type" value="mRNA"/>
</dbReference>
<dbReference type="EMBL" id="AJ249881">
    <property type="protein sequence ID" value="CAC80700.1"/>
    <property type="molecule type" value="mRNA"/>
</dbReference>
<dbReference type="EMBL" id="AL035538">
    <property type="protein sequence ID" value="CAB37564.1"/>
    <property type="status" value="ALT_SEQ"/>
    <property type="molecule type" value="Genomic_DNA"/>
</dbReference>
<dbReference type="EMBL" id="AL035539">
    <property type="protein sequence ID" value="CAB37480.1"/>
    <property type="status" value="ALT_SEQ"/>
    <property type="molecule type" value="Genomic_DNA"/>
</dbReference>
<dbReference type="EMBL" id="AL161593">
    <property type="protein sequence ID" value="CAB80489.1"/>
    <property type="status" value="ALT_SEQ"/>
    <property type="molecule type" value="Genomic_DNA"/>
</dbReference>
<dbReference type="EMBL" id="CP002687">
    <property type="protein sequence ID" value="AEE86902.1"/>
    <property type="molecule type" value="Genomic_DNA"/>
</dbReference>
<dbReference type="EMBL" id="CP002687">
    <property type="protein sequence ID" value="AEE86903.1"/>
    <property type="molecule type" value="Genomic_DNA"/>
</dbReference>
<dbReference type="EMBL" id="AY099838">
    <property type="protein sequence ID" value="AAM20689.1"/>
    <property type="molecule type" value="mRNA"/>
</dbReference>
<dbReference type="EMBL" id="BT000334">
    <property type="protein sequence ID" value="AAN15653.1"/>
    <property type="molecule type" value="mRNA"/>
</dbReference>
<dbReference type="PIR" id="JC7084">
    <property type="entry name" value="JC7084"/>
</dbReference>
<dbReference type="PIR" id="T05651">
    <property type="entry name" value="T05651"/>
</dbReference>
<dbReference type="RefSeq" id="NP_195537.2">
    <molecule id="Q9XGM8-1"/>
    <property type="nucleotide sequence ID" value="NM_119986.3"/>
</dbReference>
<dbReference type="RefSeq" id="NP_849517.1">
    <molecule id="Q9XGM8-1"/>
    <property type="nucleotide sequence ID" value="NM_179186.1"/>
</dbReference>
<dbReference type="SMR" id="Q9XGM8"/>
<dbReference type="BioGRID" id="15261">
    <property type="interactions" value="2"/>
</dbReference>
<dbReference type="FunCoup" id="Q9XGM8">
    <property type="interactions" value="3460"/>
</dbReference>
<dbReference type="STRING" id="3702.Q9XGM8"/>
<dbReference type="CAZy" id="GT13">
    <property type="family name" value="Glycosyltransferase Family 13"/>
</dbReference>
<dbReference type="GlyCosmos" id="Q9XGM8">
    <property type="glycosylation" value="1 site, No reported glycans"/>
</dbReference>
<dbReference type="GlyGen" id="Q9XGM8">
    <property type="glycosylation" value="1 site"/>
</dbReference>
<dbReference type="SwissPalm" id="Q9XGM8"/>
<dbReference type="PaxDb" id="3702-AT4G38240.2"/>
<dbReference type="EnsemblPlants" id="AT4G38240.1">
    <molecule id="Q9XGM8-1"/>
    <property type="protein sequence ID" value="AT4G38240.1"/>
    <property type="gene ID" value="AT4G38240"/>
</dbReference>
<dbReference type="EnsemblPlants" id="AT4G38240.2">
    <molecule id="Q9XGM8-1"/>
    <property type="protein sequence ID" value="AT4G38240.2"/>
    <property type="gene ID" value="AT4G38240"/>
</dbReference>
<dbReference type="GeneID" id="829981"/>
<dbReference type="Gramene" id="AT4G38240.1">
    <molecule id="Q9XGM8-1"/>
    <property type="protein sequence ID" value="AT4G38240.1"/>
    <property type="gene ID" value="AT4G38240"/>
</dbReference>
<dbReference type="Gramene" id="AT4G38240.2">
    <molecule id="Q9XGM8-1"/>
    <property type="protein sequence ID" value="AT4G38240.2"/>
    <property type="gene ID" value="AT4G38240"/>
</dbReference>
<dbReference type="KEGG" id="ath:AT4G38240"/>
<dbReference type="Araport" id="AT4G38240"/>
<dbReference type="TAIR" id="AT4G38240">
    <property type="gene designation" value="CGL1"/>
</dbReference>
<dbReference type="eggNOG" id="KOG1413">
    <property type="taxonomic scope" value="Eukaryota"/>
</dbReference>
<dbReference type="HOGENOM" id="CLU_022150_1_1_1"/>
<dbReference type="InParanoid" id="Q9XGM8"/>
<dbReference type="OMA" id="KGYDLSW"/>
<dbReference type="PhylomeDB" id="Q9XGM8"/>
<dbReference type="BioCyc" id="MetaCyc:AT4G38240-MONOMER"/>
<dbReference type="BRENDA" id="2.4.1.101">
    <property type="organism ID" value="399"/>
</dbReference>
<dbReference type="SABIO-RK" id="Q9XGM8"/>
<dbReference type="UniPathway" id="UPA00378"/>
<dbReference type="PRO" id="PR:Q9XGM8"/>
<dbReference type="Proteomes" id="UP000006548">
    <property type="component" value="Chromosome 4"/>
</dbReference>
<dbReference type="ExpressionAtlas" id="Q9XGM8">
    <property type="expression patterns" value="baseline and differential"/>
</dbReference>
<dbReference type="GO" id="GO:0005768">
    <property type="term" value="C:endosome"/>
    <property type="evidence" value="ECO:0007005"/>
    <property type="project" value="TAIR"/>
</dbReference>
<dbReference type="GO" id="GO:0005794">
    <property type="term" value="C:Golgi apparatus"/>
    <property type="evidence" value="ECO:0000314"/>
    <property type="project" value="TAIR"/>
</dbReference>
<dbReference type="GO" id="GO:0005797">
    <property type="term" value="C:Golgi medial cisterna"/>
    <property type="evidence" value="ECO:0007005"/>
    <property type="project" value="TAIR"/>
</dbReference>
<dbReference type="GO" id="GO:0000139">
    <property type="term" value="C:Golgi membrane"/>
    <property type="evidence" value="ECO:0007669"/>
    <property type="project" value="UniProtKB-SubCell"/>
</dbReference>
<dbReference type="GO" id="GO:0005802">
    <property type="term" value="C:trans-Golgi network"/>
    <property type="evidence" value="ECO:0007005"/>
    <property type="project" value="TAIR"/>
</dbReference>
<dbReference type="GO" id="GO:0003827">
    <property type="term" value="F:alpha-1,3-mannosylglycoprotein 2-beta-N-acetylglucosaminyltransferase activity"/>
    <property type="evidence" value="ECO:0000314"/>
    <property type="project" value="TAIR"/>
</dbReference>
<dbReference type="GO" id="GO:0016757">
    <property type="term" value="F:glycosyltransferase activity"/>
    <property type="evidence" value="ECO:0000315"/>
    <property type="project" value="TAIR"/>
</dbReference>
<dbReference type="GO" id="GO:0046872">
    <property type="term" value="F:metal ion binding"/>
    <property type="evidence" value="ECO:0007669"/>
    <property type="project" value="UniProtKB-KW"/>
</dbReference>
<dbReference type="GO" id="GO:0016262">
    <property type="term" value="F:protein N-acetylglucosaminyltransferase activity"/>
    <property type="evidence" value="ECO:0000315"/>
    <property type="project" value="TAIR"/>
</dbReference>
<dbReference type="GO" id="GO:0006972">
    <property type="term" value="P:hyperosmotic response"/>
    <property type="evidence" value="ECO:0000315"/>
    <property type="project" value="TAIR"/>
</dbReference>
<dbReference type="GO" id="GO:0006491">
    <property type="term" value="P:N-glycan processing"/>
    <property type="evidence" value="ECO:0000315"/>
    <property type="project" value="TAIR"/>
</dbReference>
<dbReference type="GO" id="GO:0006486">
    <property type="term" value="P:protein glycosylation"/>
    <property type="evidence" value="ECO:0000315"/>
    <property type="project" value="TAIR"/>
</dbReference>
<dbReference type="CDD" id="cd02514">
    <property type="entry name" value="GT13_GLCNAC-TI"/>
    <property type="match status" value="1"/>
</dbReference>
<dbReference type="FunFam" id="3.10.180.20:FF:000002">
    <property type="entry name" value="Alpha-1,3-mannosyl-glycoprotein 2-beta-N-acetylglucosaminyltransferase"/>
    <property type="match status" value="1"/>
</dbReference>
<dbReference type="FunFam" id="3.90.550.10:FF:000090">
    <property type="entry name" value="Alpha-1,3-mannosyl-glycoprotein 2-beta-N-acetylglucosaminyltransferase"/>
    <property type="match status" value="1"/>
</dbReference>
<dbReference type="Gene3D" id="3.10.180.20">
    <property type="entry name" value="N-Acetylglucosaminyltransferase I, Domain 2"/>
    <property type="match status" value="1"/>
</dbReference>
<dbReference type="Gene3D" id="3.90.550.10">
    <property type="entry name" value="Spore Coat Polysaccharide Biosynthesis Protein SpsA, Chain A"/>
    <property type="match status" value="1"/>
</dbReference>
<dbReference type="InterPro" id="IPR004139">
    <property type="entry name" value="Glyco_trans_13"/>
</dbReference>
<dbReference type="InterPro" id="IPR052261">
    <property type="entry name" value="Glycosyltransferase_13"/>
</dbReference>
<dbReference type="InterPro" id="IPR029044">
    <property type="entry name" value="Nucleotide-diphossugar_trans"/>
</dbReference>
<dbReference type="PANTHER" id="PTHR10468:SF0">
    <property type="entry name" value="ALPHA-1,3-MANNOSYL-GLYCOPROTEIN 2-BETA-N-ACETYLGLUCOSAMINYLTRANSFERASE"/>
    <property type="match status" value="1"/>
</dbReference>
<dbReference type="PANTHER" id="PTHR10468">
    <property type="entry name" value="PROTEIN O-LINKED-MANNOSE BETA-1,2-N-ACETYLGLUCOSAMINYLTRANSFERASE 1/ALPHA-1,3-MANNOSYL-GLYCOPROTEIN 2-BETA-N-ACETYLGLUCOSAMINYLTRANSFERASE"/>
    <property type="match status" value="1"/>
</dbReference>
<dbReference type="Pfam" id="PF03071">
    <property type="entry name" value="GNT-I"/>
    <property type="match status" value="1"/>
</dbReference>
<dbReference type="SUPFAM" id="SSF53448">
    <property type="entry name" value="Nucleotide-diphospho-sugar transferases"/>
    <property type="match status" value="1"/>
</dbReference>
<gene>
    <name evidence="11" type="primary">GNTI</name>
    <name evidence="12" type="synonym">CGL1</name>
    <name evidence="14" type="ordered locus">At4g38240</name>
    <name evidence="16" type="ORF">F20D10.360</name>
    <name evidence="15" type="ORF">F22I13.10</name>
</gene>